<evidence type="ECO:0000255" key="1">
    <source>
        <dbReference type="HAMAP-Rule" id="MF_01564"/>
    </source>
</evidence>
<protein>
    <recommendedName>
        <fullName evidence="1">Protein TusB</fullName>
    </recommendedName>
    <alternativeName>
        <fullName evidence="1">tRNA 2-thiouridine synthesizing protein B</fullName>
    </alternativeName>
</protein>
<feature type="chain" id="PRO_1000185446" description="Protein TusB">
    <location>
        <begin position="1"/>
        <end position="95"/>
    </location>
</feature>
<comment type="function">
    <text evidence="1">Part of a sulfur-relay system required for 2-thiolation of 5-methylaminomethyl-2-thiouridine (mnm(5)s(2)U) at tRNA wobble positions.</text>
</comment>
<comment type="subunit">
    <text evidence="1">Heterohexamer, formed by a dimer of trimers. The hexameric TusBCD complex contains 2 copies each of TusB, TusC and TusD. The TusBCD complex interacts with TusE.</text>
</comment>
<comment type="subcellular location">
    <subcellularLocation>
        <location evidence="1">Cytoplasm</location>
    </subcellularLocation>
</comment>
<comment type="similarity">
    <text evidence="1">Belongs to the DsrH/TusB family.</text>
</comment>
<keyword id="KW-0963">Cytoplasm</keyword>
<keyword id="KW-0819">tRNA processing</keyword>
<gene>
    <name evidence="1" type="primary">tusB</name>
    <name type="ordered locus">BUAP5A_523</name>
</gene>
<name>TUSB_BUCA5</name>
<dbReference type="EMBL" id="CP001161">
    <property type="protein sequence ID" value="ACL30874.1"/>
    <property type="molecule type" value="Genomic_DNA"/>
</dbReference>
<dbReference type="RefSeq" id="WP_009874481.1">
    <property type="nucleotide sequence ID" value="NC_011833.1"/>
</dbReference>
<dbReference type="SMR" id="B8D9V3"/>
<dbReference type="KEGG" id="bap:BUAP5A_523"/>
<dbReference type="HOGENOM" id="CLU_166087_2_1_6"/>
<dbReference type="OrthoDB" id="9795117at2"/>
<dbReference type="Proteomes" id="UP000006904">
    <property type="component" value="Chromosome"/>
</dbReference>
<dbReference type="GO" id="GO:1990228">
    <property type="term" value="C:sulfurtransferase complex"/>
    <property type="evidence" value="ECO:0007669"/>
    <property type="project" value="TreeGrafter"/>
</dbReference>
<dbReference type="GO" id="GO:0002143">
    <property type="term" value="P:tRNA wobble position uridine thiolation"/>
    <property type="evidence" value="ECO:0007669"/>
    <property type="project" value="InterPro"/>
</dbReference>
<dbReference type="Gene3D" id="3.40.1260.10">
    <property type="entry name" value="DsrEFH-like"/>
    <property type="match status" value="1"/>
</dbReference>
<dbReference type="HAMAP" id="MF_01564">
    <property type="entry name" value="Thiourid_synth_B"/>
    <property type="match status" value="1"/>
</dbReference>
<dbReference type="InterPro" id="IPR027396">
    <property type="entry name" value="DsrEFH-like"/>
</dbReference>
<dbReference type="InterPro" id="IPR023526">
    <property type="entry name" value="Sulphur_relay_TusB"/>
</dbReference>
<dbReference type="InterPro" id="IPR007215">
    <property type="entry name" value="Sulphur_relay_TusB/DsrH"/>
</dbReference>
<dbReference type="NCBIfam" id="NF010035">
    <property type="entry name" value="PRK13510.1"/>
    <property type="match status" value="1"/>
</dbReference>
<dbReference type="NCBIfam" id="TIGR03011">
    <property type="entry name" value="sulf_tusB_dsrH"/>
    <property type="match status" value="1"/>
</dbReference>
<dbReference type="PANTHER" id="PTHR37526">
    <property type="entry name" value="PROTEIN TUSB"/>
    <property type="match status" value="1"/>
</dbReference>
<dbReference type="PANTHER" id="PTHR37526:SF1">
    <property type="entry name" value="PROTEIN TUSB"/>
    <property type="match status" value="1"/>
</dbReference>
<dbReference type="Pfam" id="PF04077">
    <property type="entry name" value="DsrH"/>
    <property type="match status" value="1"/>
</dbReference>
<dbReference type="SUPFAM" id="SSF75169">
    <property type="entry name" value="DsrEFH-like"/>
    <property type="match status" value="1"/>
</dbReference>
<accession>B8D9V3</accession>
<organism>
    <name type="scientific">Buchnera aphidicola subsp. Acyrthosiphon pisum (strain 5A)</name>
    <dbReference type="NCBI Taxonomy" id="563178"/>
    <lineage>
        <taxon>Bacteria</taxon>
        <taxon>Pseudomonadati</taxon>
        <taxon>Pseudomonadota</taxon>
        <taxon>Gammaproteobacteria</taxon>
        <taxon>Enterobacterales</taxon>
        <taxon>Erwiniaceae</taxon>
        <taxon>Buchnera</taxon>
    </lineage>
</organism>
<proteinExistence type="inferred from homology"/>
<reference key="1">
    <citation type="journal article" date="2009" name="Science">
        <title>The dynamics and time scale of ongoing genomic erosion in symbiotic bacteria.</title>
        <authorList>
            <person name="Moran N.A."/>
            <person name="McLaughlin H.J."/>
            <person name="Sorek R."/>
        </authorList>
    </citation>
    <scope>NUCLEOTIDE SEQUENCE [LARGE SCALE GENOMIC DNA]</scope>
    <source>
        <strain>5A</strain>
    </source>
</reference>
<sequence length="95" mass="11097">MLHTLMKSPFETNVSLVISMLKKSDDFLALQDGVLIALKDNIFLKSIIMSPVKLYLIKEDVYARGIRKNISREFILINYIHFVSLTLKHKKQMTW</sequence>